<sequence>MSLDFGSVALPVQNEDEEYDEEDYEREKELQQLLTDLPHDMLDDDLSSPELQYSDCSEDGTDGQPHHPEQLEMSWNEQMLPKSQSVNGYNEIQSLYAGEKCGNVWEENRSKTEDRHPVYHPEEGGDEGGSGYSPPSKCEQTDLYHLPENFRPYTNGQKQEFNNQATNVIKFSDPQWNHFQGPSCQGLEPYNKVTYKPYQSSAQNNGSPAQEITGSDTFEGLQQQFLGANENSAENMQIIQLQVLNKAKERQLENLIEKLNESERQIRYLNHQLVIIKDEKDGLTLSLRESQKLFQNGKEREIQLEAQIKALETQIQALKVNEEQMIKKSRTTEMALESLKQQLVDLHHSESLQRAREQHESIVMGLTKKYEEQVLSLQKNLDATVTALKEQEDICSRLKDHVKQLERNQEAIKLEKTEIINKLTRSLEESQKQCAHLLQSGSVQEVAQLQFQLQQAQKAHAMSANMNKALQEELTELKDEISLYESAAKLGIHPSDSEGELNIELTESYVDLGIKKVNWKKSKVTSIVQEEDPNEELSKDEFILKLKAEVQRLLGSNSMKRHLVSQLQNDLKDCHKKIEDLHQVKKDEKSIEVETKTDTSEKPKNQLWPESSTSDVVRDDILLLKNEIQVLQQQNQELKETEGKLRNTNQDLCNQMRQMVQDFDHDKQEAVDRCERTYQQHHEAMKTQIRESLLAKHALEKQQLFEAYERTHLQLRSELDKLNKEVTAVQECYLEVCREKDNLELTLRKTTEKEQQTQEKIKEKLIQQLEKEWQSKLDQTIKAMKKKTLDCGSQTDQVTTSDVISKKEMAIMIEEQKCTIQQNLEQEKDIAIKGAMKKLEIELELKHCENITKQVEIAVQNAHQRWLGELPELAEYQALVKAEQKKWEEQHEVSVNKRISFAVSEAKEKWKSELENMRKNILPGKELEEKIHSLQKELELKNEEVPVVIRAELAKARSEWNKEKQEEIHRIQEQNEQDYRQFLDDHRNKINEVLAAAKEDFMKQKTELLLQKETELQTCLDQSRREWTMQEAKRIQLEIYQYEEDILTVLGVLLSDTQKEHISDSEDKQLLEIMSTCSSKWMSVQYFEKLKGCIQKAFQDTLPLLVENADPEWKKRNMAELSKDSASQGTGQGDPGPAAGHHAQPLALQATEAEADKKKVLEIKDLCCGHCFQELEKAKQECQDLKGKLEKCCRHLQHLERKHKAVVEKIGEENNKVVEELIEENNDMKNKLEELQTLCKTPPRSLSAGAIENACLPCSGGALEELRGQYIKAVKKIKCDMLRYIQESKERAAEMVKAEVLRERQETARKMRKYYLICLQQILQDDGKEGAEKKIMNAASKLATMAKLLETPISSKSQSKTTQSALPLTSEMLIAVKKSKRNDVNQKIPCCIESKSNSVNTITRTLCEQAPKRRAACNLQRLLENSEHQSIKHVGSKETHLEFQFGDGSCKHLNSLPRNVSPEFVPCEGEGGFGLHKKKDLLSDNGSESLPHSAAYPFLGTLGNKPSPRCTPGPSESGCMHITFRDSNERLGLKVYKCNPLMESENAASEKSQGLDVQEPPVKDGGDLSDCLGWPSSSATLSFDSREASFVHGRPQGTLEIPSESVKSKQFSPSGYLSDTEESNMICQTMKCQRYQTPYLSEETTYLEPGKISVNCGHPSRHKADRLKSDFKKLSSTLPSSVCQQPSRKLIVPLSSQQDSGFDSPFVNLD</sequence>
<evidence type="ECO:0000250" key="1">
    <source>
        <dbReference type="UniProtKB" id="A2AUM9"/>
    </source>
</evidence>
<evidence type="ECO:0000250" key="2">
    <source>
        <dbReference type="UniProtKB" id="Q498G2"/>
    </source>
</evidence>
<evidence type="ECO:0000255" key="3"/>
<evidence type="ECO:0000256" key="4">
    <source>
        <dbReference type="SAM" id="MobiDB-lite"/>
    </source>
</evidence>
<evidence type="ECO:0000269" key="5">
    <source>
    </source>
</evidence>
<evidence type="ECO:0000269" key="6">
    <source>
    </source>
</evidence>
<evidence type="ECO:0000269" key="7">
    <source>
    </source>
</evidence>
<evidence type="ECO:0000269" key="8">
    <source>
    </source>
</evidence>
<evidence type="ECO:0000269" key="9">
    <source>
    </source>
</evidence>
<evidence type="ECO:0000269" key="10">
    <source>
    </source>
</evidence>
<evidence type="ECO:0000269" key="11">
    <source>
    </source>
</evidence>
<evidence type="ECO:0000269" key="12">
    <source>
    </source>
</evidence>
<evidence type="ECO:0000269" key="13">
    <source>
    </source>
</evidence>
<evidence type="ECO:0000269" key="14">
    <source>
    </source>
</evidence>
<evidence type="ECO:0000269" key="15">
    <source>
    </source>
</evidence>
<evidence type="ECO:0000269" key="16">
    <source>
    </source>
</evidence>
<evidence type="ECO:0000269" key="17">
    <source>
    </source>
</evidence>
<evidence type="ECO:0000269" key="18">
    <source>
    </source>
</evidence>
<evidence type="ECO:0000269" key="19">
    <source>
    </source>
</evidence>
<evidence type="ECO:0000303" key="20">
    <source>
    </source>
</evidence>
<evidence type="ECO:0000303" key="21">
    <source>
    </source>
</evidence>
<evidence type="ECO:0000305" key="22"/>
<evidence type="ECO:0000312" key="23">
    <source>
        <dbReference type="HGNC" id="HGNC:29298"/>
    </source>
</evidence>
<evidence type="ECO:0007744" key="24">
    <source>
    </source>
</evidence>
<evidence type="ECO:0007829" key="25">
    <source>
        <dbReference type="PDB" id="4N7V"/>
    </source>
</evidence>
<evidence type="ECO:0007829" key="26">
    <source>
        <dbReference type="PDB" id="6CSU"/>
    </source>
</evidence>
<keyword id="KW-0002">3D-structure</keyword>
<keyword id="KW-0025">Alternative splicing</keyword>
<keyword id="KW-0970">Cilium biogenesis/degradation</keyword>
<keyword id="KW-0175">Coiled coil</keyword>
<keyword id="KW-0963">Cytoplasm</keyword>
<keyword id="KW-0206">Cytoskeleton</keyword>
<keyword id="KW-0225">Disease variant</keyword>
<keyword id="KW-0242">Dwarfism</keyword>
<keyword id="KW-0991">Intellectual disability</keyword>
<keyword id="KW-0597">Phosphoprotein</keyword>
<keyword id="KW-0905">Primary microcephaly</keyword>
<keyword id="KW-1267">Proteomics identification</keyword>
<keyword id="KW-1185">Reference proteome</keyword>
<organism>
    <name type="scientific">Homo sapiens</name>
    <name type="common">Human</name>
    <dbReference type="NCBI Taxonomy" id="9606"/>
    <lineage>
        <taxon>Eukaryota</taxon>
        <taxon>Metazoa</taxon>
        <taxon>Chordata</taxon>
        <taxon>Craniata</taxon>
        <taxon>Vertebrata</taxon>
        <taxon>Euteleostomi</taxon>
        <taxon>Mammalia</taxon>
        <taxon>Eutheria</taxon>
        <taxon>Euarchontoglires</taxon>
        <taxon>Primates</taxon>
        <taxon>Haplorrhini</taxon>
        <taxon>Catarrhini</taxon>
        <taxon>Hominidae</taxon>
        <taxon>Homo</taxon>
    </lineage>
</organism>
<feature type="chain" id="PRO_0000089462" description="Centrosomal protein of 152 kDa">
    <location>
        <begin position="1"/>
        <end position="1710"/>
    </location>
</feature>
<feature type="region of interest" description="Interaction with PLK4" evidence="14">
    <location>
        <begin position="1"/>
        <end position="60"/>
    </location>
</feature>
<feature type="region of interest" description="Disordered" evidence="4">
    <location>
        <begin position="1"/>
        <end position="27"/>
    </location>
</feature>
<feature type="region of interest" description="Disordered" evidence="4">
    <location>
        <begin position="39"/>
        <end position="79"/>
    </location>
</feature>
<feature type="region of interest" description="Disordered" evidence="4">
    <location>
        <begin position="108"/>
        <end position="139"/>
    </location>
</feature>
<feature type="region of interest" description="Disordered" evidence="4">
    <location>
        <begin position="587"/>
        <end position="611"/>
    </location>
</feature>
<feature type="region of interest" description="Disordered" evidence="4">
    <location>
        <begin position="1120"/>
        <end position="1142"/>
    </location>
</feature>
<feature type="coiled-coil region" evidence="3">
    <location>
        <begin position="234"/>
        <end position="490"/>
    </location>
</feature>
<feature type="coiled-coil region" evidence="3">
    <location>
        <begin position="615"/>
        <end position="664"/>
    </location>
</feature>
<feature type="coiled-coil region" evidence="3">
    <location>
        <begin position="700"/>
        <end position="772"/>
    </location>
</feature>
<feature type="coiled-coil region" evidence="3">
    <location>
        <begin position="902"/>
        <end position="993"/>
    </location>
</feature>
<feature type="coiled-coil region" evidence="3">
    <location>
        <begin position="1170"/>
        <end position="1241"/>
    </location>
</feature>
<feature type="compositionally biased region" description="Acidic residues" evidence="4">
    <location>
        <begin position="14"/>
        <end position="24"/>
    </location>
</feature>
<feature type="compositionally biased region" description="Basic and acidic residues" evidence="4">
    <location>
        <begin position="108"/>
        <end position="123"/>
    </location>
</feature>
<feature type="compositionally biased region" description="Basic and acidic residues" evidence="4">
    <location>
        <begin position="587"/>
        <end position="604"/>
    </location>
</feature>
<feature type="modified residue" description="Phosphothreonine" evidence="24">
    <location>
        <position position="1241"/>
    </location>
</feature>
<feature type="splice variant" id="VSP_035981" description="In isoform 1." evidence="20">
    <location>
        <begin position="89"/>
        <end position="181"/>
    </location>
</feature>
<feature type="splice variant" id="VSP_047002" description="In isoform 3." evidence="21">
    <location>
        <begin position="1156"/>
        <end position="1211"/>
    </location>
</feature>
<feature type="splice variant" id="VSP_035983" description="In isoform 1 and isoform 2." evidence="20">
    <original>ALPL</original>
    <variation>GMSK</variation>
    <location>
        <begin position="1365"/>
        <end position="1368"/>
    </location>
</feature>
<feature type="splice variant" id="VSP_035984" description="In isoform 1 and isoform 2." evidence="20">
    <location>
        <begin position="1369"/>
        <end position="1710"/>
    </location>
</feature>
<feature type="sequence variant" id="VAR_047932" description="In dbSNP:rs2289181.">
    <original>S</original>
    <variation>L</variation>
    <location>
        <position position="54"/>
    </location>
</feature>
<feature type="sequence variant" id="VAR_063813" description="In MCPH9; dbSNP:rs267606717." evidence="7">
    <original>Q</original>
    <variation>P</variation>
    <location>
        <position position="265"/>
    </location>
</feature>
<feature type="sequence variant" id="VAR_065258" description="In SCKL5; dbSNP:rs200879436." evidence="10">
    <original>K</original>
    <variation>R</variation>
    <location>
        <position position="667"/>
    </location>
</feature>
<feature type="sequence variant" id="VAR_050779" description="In dbSNP:rs2289178." evidence="6">
    <original>S</original>
    <variation>I</variation>
    <location>
        <position position="793"/>
    </location>
</feature>
<feature type="sequence variant" id="VAR_050780" description="In dbSNP:rs16961560.">
    <original>L</original>
    <variation>V</variation>
    <location>
        <position position="914"/>
    </location>
</feature>
<feature type="sequence variant" id="VAR_050781" description="In dbSNP:rs16961557.">
    <original>V</original>
    <variation>A</variation>
    <location>
        <position position="1106"/>
    </location>
</feature>
<feature type="mutagenesis site" description="Impairs interaction with PLK4; impaired procentriole assembly and chromosome segregation." evidence="14">
    <original>E</original>
    <variation>K</variation>
    <location>
        <position position="21"/>
    </location>
</feature>
<feature type="sequence conflict" description="In Ref. 3; AAH69186." evidence="22" ref="3">
    <original>S</original>
    <variation>P</variation>
    <location>
        <position position="558"/>
    </location>
</feature>
<feature type="helix" evidence="25">
    <location>
        <begin position="21"/>
        <end position="35"/>
    </location>
</feature>
<feature type="helix" evidence="26">
    <location>
        <begin position="1262"/>
        <end position="1310"/>
    </location>
</feature>
<proteinExistence type="evidence at protein level"/>
<protein>
    <recommendedName>
        <fullName evidence="22">Centrosomal protein of 152 kDa</fullName>
        <shortName>Cep152</shortName>
    </recommendedName>
</protein>
<dbReference type="EMBL" id="AB020719">
    <property type="protein sequence ID" value="BAA74935.1"/>
    <property type="status" value="ALT_INIT"/>
    <property type="molecule type" value="mRNA"/>
</dbReference>
<dbReference type="EMBL" id="AC012379">
    <property type="status" value="NOT_ANNOTATED_CDS"/>
    <property type="molecule type" value="Genomic_DNA"/>
</dbReference>
<dbReference type="EMBL" id="AC022084">
    <property type="status" value="NOT_ANNOTATED_CDS"/>
    <property type="molecule type" value="Genomic_DNA"/>
</dbReference>
<dbReference type="EMBL" id="AC084757">
    <property type="status" value="NOT_ANNOTATED_CDS"/>
    <property type="molecule type" value="Genomic_DNA"/>
</dbReference>
<dbReference type="EMBL" id="BC069186">
    <property type="protein sequence ID" value="AAH69186.1"/>
    <property type="status" value="ALT_SEQ"/>
    <property type="molecule type" value="mRNA"/>
</dbReference>
<dbReference type="EMBL" id="BC117182">
    <property type="protein sequence ID" value="AAI17183.1"/>
    <property type="molecule type" value="mRNA"/>
</dbReference>
<dbReference type="CCDS" id="CCDS42033.1">
    <molecule id="O94986-3"/>
</dbReference>
<dbReference type="CCDS" id="CCDS58361.1">
    <molecule id="O94986-4"/>
</dbReference>
<dbReference type="RefSeq" id="NP_001181927.1">
    <molecule id="O94986-4"/>
    <property type="nucleotide sequence ID" value="NM_001194998.2"/>
</dbReference>
<dbReference type="RefSeq" id="NP_055800.2">
    <molecule id="O94986-3"/>
    <property type="nucleotide sequence ID" value="NM_014985.4"/>
</dbReference>
<dbReference type="RefSeq" id="XP_006720500.1">
    <molecule id="O94986-4"/>
    <property type="nucleotide sequence ID" value="XM_006720437.4"/>
</dbReference>
<dbReference type="RefSeq" id="XP_054233504.1">
    <molecule id="O94986-4"/>
    <property type="nucleotide sequence ID" value="XM_054377529.1"/>
</dbReference>
<dbReference type="PDB" id="4N7V">
    <property type="method" value="X-ray"/>
    <property type="resolution" value="2.76 A"/>
    <property type="chains" value="C=1-60"/>
</dbReference>
<dbReference type="PDB" id="6CSU">
    <property type="method" value="X-ray"/>
    <property type="resolution" value="2.50 A"/>
    <property type="chains" value="B/D=1261-1313"/>
</dbReference>
<dbReference type="PDB" id="6CSV">
    <property type="method" value="X-ray"/>
    <property type="resolution" value="2.50 A"/>
    <property type="chains" value="A/B/C/D=1261-1306"/>
</dbReference>
<dbReference type="PDBsum" id="4N7V"/>
<dbReference type="PDBsum" id="6CSU"/>
<dbReference type="PDBsum" id="6CSV"/>
<dbReference type="SMR" id="O94986"/>
<dbReference type="BioGRID" id="116642">
    <property type="interactions" value="183"/>
</dbReference>
<dbReference type="ComplexPortal" id="CPX-1299">
    <property type="entry name" value="CEP152-PLK4 complex"/>
</dbReference>
<dbReference type="DIP" id="DIP-31701N"/>
<dbReference type="FunCoup" id="O94986">
    <property type="interactions" value="1228"/>
</dbReference>
<dbReference type="IntAct" id="O94986">
    <property type="interactions" value="151"/>
</dbReference>
<dbReference type="MINT" id="O94986"/>
<dbReference type="STRING" id="9606.ENSP00000370337"/>
<dbReference type="GlyCosmos" id="O94986">
    <property type="glycosylation" value="2 sites, 1 glycan"/>
</dbReference>
<dbReference type="GlyGen" id="O94986">
    <property type="glycosylation" value="3 sites, 1 O-linked glycan (3 sites)"/>
</dbReference>
<dbReference type="iPTMnet" id="O94986"/>
<dbReference type="PhosphoSitePlus" id="O94986"/>
<dbReference type="BioMuta" id="CEP152"/>
<dbReference type="jPOST" id="O94986"/>
<dbReference type="MassIVE" id="O94986"/>
<dbReference type="PaxDb" id="9606-ENSP00000370337"/>
<dbReference type="PeptideAtlas" id="O94986"/>
<dbReference type="ProteomicsDB" id="17727"/>
<dbReference type="ProteomicsDB" id="50610">
    <molecule id="O94986-4"/>
</dbReference>
<dbReference type="ProteomicsDB" id="50611">
    <molecule id="O94986-1"/>
</dbReference>
<dbReference type="ProteomicsDB" id="50612">
    <molecule id="O94986-2"/>
</dbReference>
<dbReference type="Pumba" id="O94986"/>
<dbReference type="Antibodypedia" id="50528">
    <property type="antibodies" value="187 antibodies from 27 providers"/>
</dbReference>
<dbReference type="DNASU" id="22995"/>
<dbReference type="Ensembl" id="ENST00000325747.9">
    <molecule id="O94986-1"/>
    <property type="protein sequence ID" value="ENSP00000321000.5"/>
    <property type="gene ID" value="ENSG00000103995.14"/>
</dbReference>
<dbReference type="Ensembl" id="ENST00000380950.7">
    <molecule id="O94986-4"/>
    <property type="protein sequence ID" value="ENSP00000370337.2"/>
    <property type="gene ID" value="ENSG00000103995.14"/>
</dbReference>
<dbReference type="Ensembl" id="ENST00000399334.7">
    <molecule id="O94986-3"/>
    <property type="protein sequence ID" value="ENSP00000382271.3"/>
    <property type="gene ID" value="ENSG00000103995.14"/>
</dbReference>
<dbReference type="GeneID" id="22995"/>
<dbReference type="KEGG" id="hsa:22995"/>
<dbReference type="MANE-Select" id="ENST00000380950.7">
    <property type="protein sequence ID" value="ENSP00000370337.2"/>
    <property type="RefSeq nucleotide sequence ID" value="NM_001194998.2"/>
    <property type="RefSeq protein sequence ID" value="NP_001181927.1"/>
</dbReference>
<dbReference type="UCSC" id="uc001zwy.4">
    <molecule id="O94986-4"/>
    <property type="organism name" value="human"/>
</dbReference>
<dbReference type="AGR" id="HGNC:29298"/>
<dbReference type="CTD" id="22995"/>
<dbReference type="DisGeNET" id="22995"/>
<dbReference type="GeneCards" id="CEP152"/>
<dbReference type="HGNC" id="HGNC:29298">
    <property type="gene designation" value="CEP152"/>
</dbReference>
<dbReference type="HPA" id="ENSG00000103995">
    <property type="expression patterns" value="Tissue enhanced (bone)"/>
</dbReference>
<dbReference type="MalaCards" id="CEP152"/>
<dbReference type="MIM" id="613529">
    <property type="type" value="gene"/>
</dbReference>
<dbReference type="MIM" id="613823">
    <property type="type" value="phenotype"/>
</dbReference>
<dbReference type="MIM" id="614852">
    <property type="type" value="phenotype"/>
</dbReference>
<dbReference type="neXtProt" id="NX_O94986"/>
<dbReference type="OpenTargets" id="ENSG00000103995"/>
<dbReference type="Orphanet" id="2512">
    <property type="disease" value="Autosomal recessive primary microcephaly"/>
</dbReference>
<dbReference type="Orphanet" id="808">
    <property type="disease" value="Seckel syndrome"/>
</dbReference>
<dbReference type="PharmGKB" id="PA142672126"/>
<dbReference type="VEuPathDB" id="HostDB:ENSG00000103995"/>
<dbReference type="eggNOG" id="ENOG502QT0E">
    <property type="taxonomic scope" value="Eukaryota"/>
</dbReference>
<dbReference type="GeneTree" id="ENSGT00950000182870"/>
<dbReference type="HOGENOM" id="CLU_003346_0_0_1"/>
<dbReference type="InParanoid" id="O94986"/>
<dbReference type="OMA" id="CQSGHTS"/>
<dbReference type="OrthoDB" id="10064205at2759"/>
<dbReference type="PAN-GO" id="O94986">
    <property type="GO annotations" value="2 GO annotations based on evolutionary models"/>
</dbReference>
<dbReference type="PhylomeDB" id="O94986"/>
<dbReference type="TreeFam" id="TF332017"/>
<dbReference type="PathwayCommons" id="O94986"/>
<dbReference type="Reactome" id="R-HSA-2565942">
    <property type="pathway name" value="Regulation of PLK1 Activity at G2/M Transition"/>
</dbReference>
<dbReference type="Reactome" id="R-HSA-380259">
    <property type="pathway name" value="Loss of Nlp from mitotic centrosomes"/>
</dbReference>
<dbReference type="Reactome" id="R-HSA-380270">
    <property type="pathway name" value="Recruitment of mitotic centrosome proteins and complexes"/>
</dbReference>
<dbReference type="Reactome" id="R-HSA-380284">
    <property type="pathway name" value="Loss of proteins required for interphase microtubule organization from the centrosome"/>
</dbReference>
<dbReference type="Reactome" id="R-HSA-380320">
    <property type="pathway name" value="Recruitment of NuMA to mitotic centrosomes"/>
</dbReference>
<dbReference type="Reactome" id="R-HSA-5620912">
    <property type="pathway name" value="Anchoring of the basal body to the plasma membrane"/>
</dbReference>
<dbReference type="Reactome" id="R-HSA-8854518">
    <property type="pathway name" value="AURKA Activation by TPX2"/>
</dbReference>
<dbReference type="SignaLink" id="O94986"/>
<dbReference type="SIGNOR" id="O94986"/>
<dbReference type="BioGRID-ORCS" id="22995">
    <property type="hits" value="165 hits in 1157 CRISPR screens"/>
</dbReference>
<dbReference type="CD-CODE" id="1DAEF59B">
    <property type="entry name" value="Pericentriolar matrix"/>
</dbReference>
<dbReference type="CD-CODE" id="890CF536">
    <property type="entry name" value="Synthetic Condensate 000368"/>
</dbReference>
<dbReference type="CD-CODE" id="8C2F96ED">
    <property type="entry name" value="Centrosome"/>
</dbReference>
<dbReference type="CD-CODE" id="FE3CB95B">
    <property type="entry name" value="Synthetic Condensate 000371"/>
</dbReference>
<dbReference type="ChiTaRS" id="CEP152">
    <property type="organism name" value="human"/>
</dbReference>
<dbReference type="GeneWiki" id="CEP152"/>
<dbReference type="GenomeRNAi" id="22995"/>
<dbReference type="Pharos" id="O94986">
    <property type="development level" value="Tbio"/>
</dbReference>
<dbReference type="PRO" id="PR:O94986"/>
<dbReference type="Proteomes" id="UP000005640">
    <property type="component" value="Chromosome 15"/>
</dbReference>
<dbReference type="RNAct" id="O94986">
    <property type="molecule type" value="protein"/>
</dbReference>
<dbReference type="Bgee" id="ENSG00000103995">
    <property type="expression patterns" value="Expressed in secondary oocyte and 142 other cell types or tissues"/>
</dbReference>
<dbReference type="ExpressionAtlas" id="O94986">
    <property type="expression patterns" value="baseline and differential"/>
</dbReference>
<dbReference type="GO" id="GO:0005814">
    <property type="term" value="C:centriole"/>
    <property type="evidence" value="ECO:0000314"/>
    <property type="project" value="UniProtKB"/>
</dbReference>
<dbReference type="GO" id="GO:0005813">
    <property type="term" value="C:centrosome"/>
    <property type="evidence" value="ECO:0000314"/>
    <property type="project" value="HPA"/>
</dbReference>
<dbReference type="GO" id="GO:0036064">
    <property type="term" value="C:ciliary basal body"/>
    <property type="evidence" value="ECO:0000314"/>
    <property type="project" value="HPA"/>
</dbReference>
<dbReference type="GO" id="GO:0005829">
    <property type="term" value="C:cytosol"/>
    <property type="evidence" value="ECO:0000304"/>
    <property type="project" value="Reactome"/>
</dbReference>
<dbReference type="GO" id="GO:0098536">
    <property type="term" value="C:deuterosome"/>
    <property type="evidence" value="ECO:0000250"/>
    <property type="project" value="UniProtKB"/>
</dbReference>
<dbReference type="GO" id="GO:0016604">
    <property type="term" value="C:nuclear body"/>
    <property type="evidence" value="ECO:0000314"/>
    <property type="project" value="HPA"/>
</dbReference>
<dbReference type="GO" id="GO:0005654">
    <property type="term" value="C:nucleoplasm"/>
    <property type="evidence" value="ECO:0000314"/>
    <property type="project" value="HPA"/>
</dbReference>
<dbReference type="GO" id="GO:0000242">
    <property type="term" value="C:pericentriolar material"/>
    <property type="evidence" value="ECO:0000314"/>
    <property type="project" value="UniProtKB"/>
</dbReference>
<dbReference type="GO" id="GO:0120098">
    <property type="term" value="C:procentriole"/>
    <property type="evidence" value="ECO:0000314"/>
    <property type="project" value="ComplexPortal"/>
</dbReference>
<dbReference type="GO" id="GO:0120099">
    <property type="term" value="C:procentriole replication complex"/>
    <property type="evidence" value="ECO:0000353"/>
    <property type="project" value="ComplexPortal"/>
</dbReference>
<dbReference type="GO" id="GO:0019901">
    <property type="term" value="F:protein kinase binding"/>
    <property type="evidence" value="ECO:0000353"/>
    <property type="project" value="UniProtKB"/>
</dbReference>
<dbReference type="GO" id="GO:0030030">
    <property type="term" value="P:cell projection organization"/>
    <property type="evidence" value="ECO:0007669"/>
    <property type="project" value="UniProtKB-KW"/>
</dbReference>
<dbReference type="GO" id="GO:0007099">
    <property type="term" value="P:centriole replication"/>
    <property type="evidence" value="ECO:0000314"/>
    <property type="project" value="ComplexPortal"/>
</dbReference>
<dbReference type="GO" id="GO:0051298">
    <property type="term" value="P:centrosome duplication"/>
    <property type="evidence" value="ECO:0000315"/>
    <property type="project" value="UniProtKB"/>
</dbReference>
<dbReference type="GO" id="GO:0098535">
    <property type="term" value="P:de novo centriole assembly involved in multi-ciliated epithelial cell differentiation"/>
    <property type="evidence" value="ECO:0000250"/>
    <property type="project" value="UniProtKB"/>
</dbReference>
<dbReference type="DisProt" id="DP02628"/>
<dbReference type="InterPro" id="IPR051235">
    <property type="entry name" value="CEP152/SHC-Transforming"/>
</dbReference>
<dbReference type="PANTHER" id="PTHR10337:SF6">
    <property type="entry name" value="CENTROSOMAL PROTEIN OF 152 KDA"/>
    <property type="match status" value="1"/>
</dbReference>
<dbReference type="PANTHER" id="PTHR10337">
    <property type="entry name" value="SHC TRANSFORMING PROTEIN"/>
    <property type="match status" value="1"/>
</dbReference>
<name>CE152_HUMAN</name>
<accession>O94986</accession>
<accession>E7ER66</accession>
<accession>Q17RV1</accession>
<accession>Q6NTA0</accession>
<comment type="function">
    <text evidence="1 2 8 9 10">Necessary for centrosome duplication; the function also seems to involve CEP63, CDK5RAP2 and WDR62 through a stepwise assembled complex at the centrosome that recruits CDK2 required for centriole duplication (PubMed:26297806). Acts as a molecular scaffold facilitating the interaction of PLK4 and CPAP, 2 molecules involved in centriole formation (PubMed:20852615, PubMed:21059844). Proposed to snatch PLK4 away from PLK4:CEP92 complexes in early G1 daughter centriole and to reposition PLK4 at the outer boundary of a newly forming CEP152 ring structure (PubMed:24997597). Also plays a key role in deuterosome-mediated centriole amplification in multiciliated that can generate more than 100 centrioles (By similarity). Overexpression of CEP152 can drive amplification of centrioles (PubMed:20852615).</text>
</comment>
<comment type="subunit">
    <text evidence="1 8 9 10 11 13 15">Interacts (via N-terminus) with PLK4; the interaction is mutally exclusive with a PLK4:CEP192 interaction (PubMed:20852615, PubMed:21059844, PubMed:24997597). Interacts (via C-terminus) with CPAP (via-N-terminus) (PubMed:20852615). Interacts with CINP (PubMed:21131973). Interacts with CDK5RAP2, WDR62, CEP63 and CEP131 (PubMed:21983783, PubMed:24613305, PubMed:26297806). CEP63, CDK5RAP2, CEP152, WDR62 are proposed to form a stepwise assembled complex at the centrosome forming a ring near parental centrioles (PubMed:26297806). Interacts with DEUP1; this interaction recruits CEP152 to the deuterosome. The interactions with CEP63 and DEUP1 are mutually exclusive (By similarity). Interacts with CCDC66 (PubMed:35849559).</text>
</comment>
<comment type="interaction">
    <interactant intactId="EBI-311012">
        <id>O94986</id>
    </interactant>
    <interactant intactId="EBI-2558372">
        <id>Q9UPN4</id>
        <label>CEP131</label>
    </interactant>
    <organismsDiffer>false</organismsDiffer>
    <experiments>3</experiments>
</comment>
<comment type="interaction">
    <interactant intactId="EBI-311012">
        <id>O94986</id>
    </interactant>
    <interactant intactId="EBI-1055820">
        <id>Q9HCE1</id>
        <label>MOV10</label>
    </interactant>
    <organismsDiffer>false</organismsDiffer>
    <experiments>3</experiments>
</comment>
<comment type="interaction">
    <interactant intactId="EBI-311012">
        <id>O94986</id>
    </interactant>
    <interactant intactId="EBI-746202">
        <id>O00444</id>
        <label>PLK4</label>
    </interactant>
    <organismsDiffer>false</organismsDiffer>
    <experiments>7</experiments>
</comment>
<comment type="interaction">
    <interactant intactId="EBI-15878364">
        <id>O94986-3</id>
    </interactant>
    <interactant intactId="EBI-1046993">
        <id>Q66GS9</id>
        <label>CEP135</label>
    </interactant>
    <organismsDiffer>false</organismsDiffer>
    <experiments>2</experiments>
</comment>
<comment type="interaction">
    <interactant intactId="EBI-15878364">
        <id>O94986-3</id>
    </interactant>
    <interactant intactId="EBI-746202">
        <id>O00444</id>
        <label>PLK4</label>
    </interactant>
    <organismsDiffer>false</organismsDiffer>
    <experiments>16</experiments>
</comment>
<comment type="subcellular location">
    <subcellularLocation>
        <location evidence="5 7 9 10 11 15 17 19">Cytoplasm</location>
        <location evidence="5 7 9 10 11 15 17 19">Cytoskeleton</location>
        <location evidence="5 7 9 10 11 15 17 19">Microtubule organizing center</location>
        <location evidence="5 7 9 10 11 15 17 19">Centrosome</location>
    </subcellularLocation>
    <subcellularLocation>
        <location evidence="11 12 15 16 18">Cytoplasm</location>
        <location evidence="11 12 15 16 18">Cytoskeleton</location>
        <location evidence="11 12 15 16 18">Microtubule organizing center</location>
        <location evidence="11 12 15 16 18">Centrosome</location>
        <location evidence="11 12 15 16 18">Centriole</location>
    </subcellularLocation>
    <text evidence="2 11 15 16">Colocalizes with CDK5RAP2, WDR62 and CEP63 in a discrete ring around the proximal end of the parental centriole. At this site, a cohesive structure is predicted to engage parental centrioles and procentrioles (PubMed:21983783, PubMed:26297806). Localizes to the deuterosome (By similarity). Localizes to pericentriolar material (PCM) (PubMed:26337392).</text>
</comment>
<comment type="alternative products">
    <event type="alternative splicing"/>
    <isoform>
        <id>O94986-4</id>
        <name>4</name>
        <sequence type="displayed"/>
    </isoform>
    <isoform>
        <id>O94986-1</id>
        <name>1</name>
        <sequence type="described" ref="VSP_035981 VSP_035983 VSP_035984"/>
    </isoform>
    <isoform>
        <id>O94986-2</id>
        <name>2</name>
        <sequence type="described" ref="VSP_035983 VSP_035984"/>
    </isoform>
    <isoform>
        <id>O94986-3</id>
        <name>3</name>
        <sequence type="described" ref="VSP_047002"/>
    </isoform>
</comment>
<comment type="disease" evidence="7">
    <disease id="DI-03546">
        <name>Microcephaly 9, primary, autosomal recessive</name>
        <acronym>MCPH9</acronym>
        <description>A disease defined as a head circumference more than 3 standard deviations below the age-related mean. Brain weight is markedly reduced and the cerebral cortex is disproportionately small. Despite this marked reduction in size, the gyral pattern is relatively well preserved, with no major abnormality in cortical architecture. Affected individuals have intellectual disability. Primary microcephaly is further defined by the absence of other syndromic features or significant neurological deficits due to degenerative brain disorder.</description>
        <dbReference type="MIM" id="614852"/>
    </disease>
    <text>The disease is caused by variants affecting the gene represented in this entry.</text>
</comment>
<comment type="disease" evidence="10">
    <disease id="DI-03060">
        <name>Seckel syndrome 5</name>
        <acronym>SCKL5</acronym>
        <description>A rare autosomal recessive disorder characterized by proportionate dwarfism of prenatal onset associated with low birth weight, growth retardation, severe microcephaly with a bird-headed like appearance, and intellectual disability.</description>
        <dbReference type="MIM" id="613823"/>
    </disease>
    <text>The disease is caused by variants affecting the gene represented in this entry.</text>
</comment>
<comment type="similarity">
    <text evidence="22">Belongs to the CEP152 family.</text>
</comment>
<comment type="sequence caution" evidence="22">
    <conflict type="miscellaneous discrepancy">
        <sequence resource="EMBL-CDS" id="AAH69186"/>
    </conflict>
    <text>Contaminating sequence. Potential poly-A sequence.</text>
</comment>
<comment type="sequence caution" evidence="22">
    <conflict type="erroneous initiation">
        <sequence resource="EMBL-CDS" id="BAA74935"/>
    </conflict>
    <text>Extended N-terminus.</text>
</comment>
<gene>
    <name evidence="23" type="primary">CEP152</name>
    <name type="synonym">KIAA0912</name>
</gene>
<reference key="1">
    <citation type="journal article" date="1998" name="DNA Res.">
        <title>Prediction of the coding sequences of unidentified human genes. XII. The complete sequences of 100 new cDNA clones from brain which code for large proteins in vitro.</title>
        <authorList>
            <person name="Nagase T."/>
            <person name="Ishikawa K."/>
            <person name="Suyama M."/>
            <person name="Kikuno R."/>
            <person name="Hirosawa M."/>
            <person name="Miyajima N."/>
            <person name="Tanaka A."/>
            <person name="Kotani H."/>
            <person name="Nomura N."/>
            <person name="Ohara O."/>
        </authorList>
    </citation>
    <scope>NUCLEOTIDE SEQUENCE [LARGE SCALE MRNA] (ISOFORM 1)</scope>
    <source>
        <tissue>Brain</tissue>
    </source>
</reference>
<reference key="2">
    <citation type="journal article" date="2006" name="Nature">
        <title>Analysis of the DNA sequence and duplication history of human chromosome 15.</title>
        <authorList>
            <person name="Zody M.C."/>
            <person name="Garber M."/>
            <person name="Sharpe T."/>
            <person name="Young S.K."/>
            <person name="Rowen L."/>
            <person name="O'Neill K."/>
            <person name="Whittaker C.A."/>
            <person name="Kamal M."/>
            <person name="Chang J.L."/>
            <person name="Cuomo C.A."/>
            <person name="Dewar K."/>
            <person name="FitzGerald M.G."/>
            <person name="Kodira C.D."/>
            <person name="Madan A."/>
            <person name="Qin S."/>
            <person name="Yang X."/>
            <person name="Abbasi N."/>
            <person name="Abouelleil A."/>
            <person name="Arachchi H.M."/>
            <person name="Baradarani L."/>
            <person name="Birditt B."/>
            <person name="Bloom S."/>
            <person name="Bloom T."/>
            <person name="Borowsky M.L."/>
            <person name="Burke J."/>
            <person name="Butler J."/>
            <person name="Cook A."/>
            <person name="DeArellano K."/>
            <person name="DeCaprio D."/>
            <person name="Dorris L. III"/>
            <person name="Dors M."/>
            <person name="Eichler E.E."/>
            <person name="Engels R."/>
            <person name="Fahey J."/>
            <person name="Fleetwood P."/>
            <person name="Friedman C."/>
            <person name="Gearin G."/>
            <person name="Hall J.L."/>
            <person name="Hensley G."/>
            <person name="Johnson E."/>
            <person name="Jones C."/>
            <person name="Kamat A."/>
            <person name="Kaur A."/>
            <person name="Locke D.P."/>
            <person name="Madan A."/>
            <person name="Munson G."/>
            <person name="Jaffe D.B."/>
            <person name="Lui A."/>
            <person name="Macdonald P."/>
            <person name="Mauceli E."/>
            <person name="Naylor J.W."/>
            <person name="Nesbitt R."/>
            <person name="Nicol R."/>
            <person name="O'Leary S.B."/>
            <person name="Ratcliffe A."/>
            <person name="Rounsley S."/>
            <person name="She X."/>
            <person name="Sneddon K.M.B."/>
            <person name="Stewart S."/>
            <person name="Sougnez C."/>
            <person name="Stone S.M."/>
            <person name="Topham K."/>
            <person name="Vincent D."/>
            <person name="Wang S."/>
            <person name="Zimmer A.R."/>
            <person name="Birren B.W."/>
            <person name="Hood L."/>
            <person name="Lander E.S."/>
            <person name="Nusbaum C."/>
        </authorList>
    </citation>
    <scope>NUCLEOTIDE SEQUENCE [LARGE SCALE GENOMIC DNA]</scope>
</reference>
<reference key="3">
    <citation type="journal article" date="2004" name="Genome Res.">
        <title>The status, quality, and expansion of the NIH full-length cDNA project: the Mammalian Gene Collection (MGC).</title>
        <authorList>
            <consortium name="The MGC Project Team"/>
        </authorList>
    </citation>
    <scope>NUCLEOTIDE SEQUENCE [LARGE SCALE MRNA] (ISOFORM 3)</scope>
    <source>
        <tissue>Heart</tissue>
        <tissue>Lung</tissue>
        <tissue>Testis</tissue>
    </source>
</reference>
<reference key="4">
    <citation type="journal article" date="2003" name="Nature">
        <title>Proteomic characterization of the human centrosome by protein correlation profiling.</title>
        <authorList>
            <person name="Andersen J.S."/>
            <person name="Wilkinson C.J."/>
            <person name="Mayor T."/>
            <person name="Mortensen P."/>
            <person name="Nigg E.A."/>
            <person name="Mann M."/>
        </authorList>
    </citation>
    <scope>IDENTIFICATION BY MASS SPECTROMETRY</scope>
    <scope>SUBCELLULAR LOCATION [LARGE SCALE ANALYSIS]</scope>
    <source>
        <tissue>Lymphoblast</tissue>
    </source>
</reference>
<reference key="5">
    <citation type="journal article" date="2008" name="Proc. Natl. Acad. Sci. U.S.A.">
        <title>A quantitative atlas of mitotic phosphorylation.</title>
        <authorList>
            <person name="Dephoure N."/>
            <person name="Zhou C."/>
            <person name="Villen J."/>
            <person name="Beausoleil S.A."/>
            <person name="Bakalarski C.E."/>
            <person name="Elledge S.J."/>
            <person name="Gygi S.P."/>
        </authorList>
    </citation>
    <scope>IDENTIFICATION BY MASS SPECTROMETRY [LARGE SCALE ANALYSIS]</scope>
    <source>
        <tissue>Cervix carcinoma</tissue>
    </source>
</reference>
<reference key="6">
    <citation type="journal article" date="2010" name="J. Cell Biol.">
        <title>Cep152 acts as a scaffold for recruitment of Plk4 and CPAP to the centrosome.</title>
        <authorList>
            <person name="Cizmecioglu O."/>
            <person name="Arnold M."/>
            <person name="Bahtz R."/>
            <person name="Settele F."/>
            <person name="Ehret L."/>
            <person name="Haselmann-Weiss U."/>
            <person name="Antony C."/>
            <person name="Hoffmann I."/>
        </authorList>
    </citation>
    <scope>FUNCTION</scope>
    <scope>SUBCELLULAR LOCATION</scope>
    <scope>INTERACTION WITH PLK4</scope>
</reference>
<reference key="7">
    <citation type="journal article" date="2010" name="Nature">
        <title>Asterless is a scaffold for the onset of centriole assembly.</title>
        <authorList>
            <person name="Dzhindzhev N.S."/>
            <person name="Yu Q.D."/>
            <person name="Weiskopf K."/>
            <person name="Tzolovsky G."/>
            <person name="Cunha-Ferreira I."/>
            <person name="Riparbelli M."/>
            <person name="Rodrigues-Martins A."/>
            <person name="Bettencourt-Dias M."/>
            <person name="Callaini G."/>
            <person name="Glover D.M."/>
        </authorList>
    </citation>
    <scope>FUNCTION</scope>
    <scope>INTERACTION WITH PLK4 AND CPAP</scope>
</reference>
<reference key="8">
    <citation type="journal article" date="2011" name="EMBO J.">
        <title>The human microcephaly protein STIL interacts with CPAP and is required for procentriole formation.</title>
        <authorList>
            <person name="Tang C.J."/>
            <person name="Lin S.Y."/>
            <person name="Hsu W.B."/>
            <person name="Lin Y.N."/>
            <person name="Wu C.T."/>
            <person name="Lin Y.C."/>
            <person name="Chang C.W."/>
            <person name="Wu K.S."/>
            <person name="Tang T.K."/>
        </authorList>
    </citation>
    <scope>SUBCELLULAR LOCATION</scope>
</reference>
<reference key="9">
    <citation type="journal article" date="2011" name="Nat. Genet.">
        <title>CEP152 is a genome maintenance protein disrupted in Seckel syndrome.</title>
        <authorList>
            <person name="Kalay E."/>
            <person name="Yigit G."/>
            <person name="Aslan Y."/>
            <person name="Brown K.E."/>
            <person name="Pohl E."/>
            <person name="Bicknell L.S."/>
            <person name="Kayserili H."/>
            <person name="Li Y."/>
            <person name="Tuysuz B."/>
            <person name="Nurnberg G."/>
            <person name="Kiess W."/>
            <person name="Koegl M."/>
            <person name="Baessmann I."/>
            <person name="Buruk K."/>
            <person name="Toraman B."/>
            <person name="Kayipmaz S."/>
            <person name="Kul S."/>
            <person name="Ikbal M."/>
            <person name="Turner D.J."/>
            <person name="Taylor M.S."/>
            <person name="Aerts J."/>
            <person name="Scott C."/>
            <person name="Milstein K."/>
            <person name="Dollfus H."/>
            <person name="Wieczorek D."/>
            <person name="Brunner H.G."/>
            <person name="Hurles M."/>
            <person name="Jackson A.P."/>
            <person name="Rauch A."/>
            <person name="Nurnberg P."/>
            <person name="Karaguzel A."/>
            <person name="Wollnik B."/>
        </authorList>
    </citation>
    <scope>FUNCTION</scope>
    <scope>SUBCELLULAR LOCATION</scope>
    <scope>INTERACTION WITH CINP</scope>
    <scope>VARIANT SCKL5 ARG-667</scope>
</reference>
<reference key="10">
    <citation type="journal article" date="2011" name="Nat. Genet.">
        <title>A primary microcephaly protein complex forms a ring around parental centrioles.</title>
        <authorList>
            <person name="Sir J.H."/>
            <person name="Barr A.R."/>
            <person name="Nicholas A.K."/>
            <person name="Carvalho O.P."/>
            <person name="Khurshid M."/>
            <person name="Sossick A."/>
            <person name="Reichelt S."/>
            <person name="D'Santos C."/>
            <person name="Woods C.G."/>
            <person name="Gergely F."/>
        </authorList>
    </citation>
    <scope>INTERACTION WITH CEP63</scope>
    <scope>SUBCELLULAR LOCATION</scope>
</reference>
<reference key="11">
    <citation type="journal article" date="2013" name="J. Proteome Res.">
        <title>Toward a comprehensive characterization of a human cancer cell phosphoproteome.</title>
        <authorList>
            <person name="Zhou H."/>
            <person name="Di Palma S."/>
            <person name="Preisinger C."/>
            <person name="Peng M."/>
            <person name="Polat A.N."/>
            <person name="Heck A.J."/>
            <person name="Mohammed S."/>
        </authorList>
    </citation>
    <scope>PHOSPHORYLATION [LARGE SCALE ANALYSIS] AT THR-1241</scope>
    <scope>IDENTIFICATION BY MASS SPECTROMETRY [LARGE SCALE ANALYSIS]</scope>
    <source>
        <tissue>Erythroleukemia</tissue>
    </source>
</reference>
<reference key="12">
    <citation type="journal article" date="2014" name="Curr. Biol.">
        <title>Proximity interactions among centrosome components identify regulators of centriole duplication.</title>
        <authorList>
            <person name="Firat-Karalar E.N."/>
            <person name="Rauniyar N."/>
            <person name="Yates J.R. III"/>
            <person name="Stearns T."/>
        </authorList>
    </citation>
    <scope>INTERACTION WITH CDK5RAP2</scope>
</reference>
<reference key="13">
    <citation type="journal article" date="2015" name="Elife">
        <title>Centriolar satellites assemble centrosomal microcephaly proteins to recruit CDK2 and promote centriole duplication.</title>
        <authorList>
            <person name="Kodani A."/>
            <person name="Yu T.W."/>
            <person name="Johnson J.R."/>
            <person name="Jayaraman D."/>
            <person name="Johnson T.L."/>
            <person name="Al-Gazali L."/>
            <person name="Sztriha L."/>
            <person name="Partlow J.N."/>
            <person name="Kim H."/>
            <person name="Krup A.L."/>
            <person name="Dammermann A."/>
            <person name="Krogan N."/>
            <person name="Walsh C.A."/>
            <person name="Reiter J.F."/>
        </authorList>
    </citation>
    <scope>FUNCTION</scope>
    <scope>INTERACTION WITH CDK5RAP2; WDR62; CEP63 AND CEP131</scope>
    <scope>SUBCELLULAR LOCATION</scope>
</reference>
<reference key="14">
    <citation type="journal article" date="2015" name="Mol. Biol. Cell">
        <title>MDM1 is a microtubule-binding protein that negatively regulates centriole duplication.</title>
        <authorList>
            <person name="Van de Mark D."/>
            <person name="Kong D."/>
            <person name="Loncarek J."/>
            <person name="Stearns T."/>
        </authorList>
    </citation>
    <scope>SUBCELLULAR LOCATION</scope>
</reference>
<reference key="15">
    <citation type="journal article" date="2019" name="J. Biol. Chem.">
        <title>Polo-like kinase 4 maintains centriolar satellite integrity by phosphorylation of centrosomal protein 131 (CEP131).</title>
        <authorList>
            <person name="Denu R.A."/>
            <person name="Sass M.M."/>
            <person name="Johnson J.M."/>
            <person name="Potts G.K."/>
            <person name="Choudhary A."/>
            <person name="Coon J.J."/>
            <person name="Burkard M.E."/>
        </authorList>
    </citation>
    <scope>SUBCELLULAR LOCATION</scope>
</reference>
<reference key="16">
    <citation type="journal article" date="2020" name="Nat. Commun.">
        <title>CEP44 ensures the formation of bona fide centriole wall, a requirement for the centriole-to-centrosome conversion.</title>
        <authorList>
            <person name="Atorino E.S."/>
            <person name="Hata S."/>
            <person name="Funaya C."/>
            <person name="Neuner A."/>
            <person name="Schiebel E."/>
        </authorList>
    </citation>
    <scope>SUBCELLULAR LOCATION</scope>
</reference>
<reference key="17">
    <citation type="journal article" date="2022" name="PLoS Biol.">
        <title>The ciliopathy protein CCDC66 controls mitotic progression and cytokinesis by promoting microtubule nucleation and organization.</title>
        <authorList>
            <person name="Batman U."/>
            <person name="Deretic J."/>
            <person name="Firat-Karalar E.N."/>
        </authorList>
    </citation>
    <scope>SUBCELLULAR LOCATION</scope>
    <scope>INTERACTION WITH CCDC66</scope>
</reference>
<reference key="18">
    <citation type="journal article" date="2014" name="Nat. Struct. Mol. Biol.">
        <title>Molecular basis for unidirectional scaffold switching of human Plk4 in centriole biogenesis.</title>
        <authorList>
            <person name="Park S.Y."/>
            <person name="Park J.E."/>
            <person name="Kim T.S."/>
            <person name="Kim J.H."/>
            <person name="Kwak M.J."/>
            <person name="Ku B."/>
            <person name="Tian L."/>
            <person name="Murugan R.N."/>
            <person name="Ahn M."/>
            <person name="Komiya S."/>
            <person name="Hojo H."/>
            <person name="Kim N.H."/>
            <person name="Kim B.Y."/>
            <person name="Bang J.K."/>
            <person name="Erikson R.L."/>
            <person name="Lee K.W."/>
            <person name="Kim S.J."/>
            <person name="Oh B.H."/>
            <person name="Yang W."/>
            <person name="Lee K.S."/>
        </authorList>
    </citation>
    <scope>X-RAY CRYSTALLOGRAPHY (2.7 ANGSTROMS) OF 1-60 IN COMPLEX WITH PLK4</scope>
    <scope>FUNCTION</scope>
    <scope>MUTAGENESIS OF GLU-21</scope>
</reference>
<reference key="19">
    <citation type="journal article" date="2010" name="Am. J. Hum. Genet.">
        <title>Mutations in centrosomal protein CEP152 in primary microcephaly families linked to MCPH4.</title>
        <authorList>
            <person name="Guernsey D.L."/>
            <person name="Jiang H."/>
            <person name="Hussin J."/>
            <person name="Arnold M."/>
            <person name="Bouyakdan K."/>
            <person name="Perry S."/>
            <person name="Babineau-Sturk T."/>
            <person name="Beis J."/>
            <person name="Dumas N."/>
            <person name="Evans S.C."/>
            <person name="Ferguson M."/>
            <person name="Matsuoka M."/>
            <person name="Macgillivray C."/>
            <person name="Nightingale M."/>
            <person name="Patry L."/>
            <person name="Rideout A.L."/>
            <person name="Thomas A."/>
            <person name="Orr A."/>
            <person name="Hoffmann I."/>
            <person name="Michaud J.L."/>
            <person name="Awadalla P."/>
            <person name="Meek D.C."/>
            <person name="Ludman M."/>
            <person name="Samuels M.E."/>
        </authorList>
    </citation>
    <scope>VARIANT MCPH9 PRO-265</scope>
    <scope>SUBCELLULAR LOCATION</scope>
</reference>
<reference key="20">
    <citation type="journal article" date="2010" name="Leg. Med.">
        <title>A Japanese-specific allele in the GALNT11 gene.</title>
        <authorList>
            <person name="Yuasa I."/>
            <person name="Umetsu K."/>
            <person name="Matsusue A."/>
            <person name="Nishimukai H."/>
            <person name="Harihara S."/>
            <person name="Fukumori Y."/>
            <person name="Saitou N."/>
            <person name="Jin F."/>
            <person name="Chattopadhyay P.K."/>
            <person name="Henke L."/>
            <person name="Henke J."/>
        </authorList>
    </citation>
    <scope>VARIANT ILE-793</scope>
</reference>